<proteinExistence type="inferred from homology"/>
<organism>
    <name type="scientific">Chlorobium phaeobacteroides (strain BS1)</name>
    <dbReference type="NCBI Taxonomy" id="331678"/>
    <lineage>
        <taxon>Bacteria</taxon>
        <taxon>Pseudomonadati</taxon>
        <taxon>Chlorobiota</taxon>
        <taxon>Chlorobiia</taxon>
        <taxon>Chlorobiales</taxon>
        <taxon>Chlorobiaceae</taxon>
        <taxon>Chlorobium/Pelodictyon group</taxon>
        <taxon>Chlorobium</taxon>
    </lineage>
</organism>
<keyword id="KW-0997">Cell inner membrane</keyword>
<keyword id="KW-1003">Cell membrane</keyword>
<keyword id="KW-0472">Membrane</keyword>
<keyword id="KW-0812">Transmembrane</keyword>
<keyword id="KW-1133">Transmembrane helix</keyword>
<dbReference type="EMBL" id="CP001101">
    <property type="protein sequence ID" value="ACE03955.1"/>
    <property type="molecule type" value="Genomic_DNA"/>
</dbReference>
<dbReference type="SMR" id="B3EQ23"/>
<dbReference type="STRING" id="331678.Cphamn1_1013"/>
<dbReference type="KEGG" id="cpb:Cphamn1_1013"/>
<dbReference type="eggNOG" id="COG1295">
    <property type="taxonomic scope" value="Bacteria"/>
</dbReference>
<dbReference type="HOGENOM" id="CLU_032288_1_0_10"/>
<dbReference type="OrthoDB" id="9808671at2"/>
<dbReference type="GO" id="GO:0005886">
    <property type="term" value="C:plasma membrane"/>
    <property type="evidence" value="ECO:0007669"/>
    <property type="project" value="UniProtKB-SubCell"/>
</dbReference>
<dbReference type="HAMAP" id="MF_00672">
    <property type="entry name" value="UPF0761"/>
    <property type="match status" value="1"/>
</dbReference>
<dbReference type="InterPro" id="IPR023679">
    <property type="entry name" value="UPF0761_bac"/>
</dbReference>
<dbReference type="InterPro" id="IPR017039">
    <property type="entry name" value="Virul_fac_BrkB"/>
</dbReference>
<dbReference type="NCBIfam" id="TIGR00765">
    <property type="entry name" value="yihY_not_rbn"/>
    <property type="match status" value="1"/>
</dbReference>
<dbReference type="PANTHER" id="PTHR30213">
    <property type="entry name" value="INNER MEMBRANE PROTEIN YHJD"/>
    <property type="match status" value="1"/>
</dbReference>
<dbReference type="PANTHER" id="PTHR30213:SF0">
    <property type="entry name" value="UPF0761 MEMBRANE PROTEIN YIHY"/>
    <property type="match status" value="1"/>
</dbReference>
<dbReference type="Pfam" id="PF03631">
    <property type="entry name" value="Virul_fac_BrkB"/>
    <property type="match status" value="1"/>
</dbReference>
<gene>
    <name type="ordered locus">Cphamn1_1013</name>
</gene>
<feature type="chain" id="PRO_0000391028" description="UPF0761 membrane protein Cphamn1_1013">
    <location>
        <begin position="1"/>
        <end position="427"/>
    </location>
</feature>
<feature type="transmembrane region" description="Helical" evidence="1">
    <location>
        <begin position="51"/>
        <end position="71"/>
    </location>
</feature>
<feature type="transmembrane region" description="Helical" evidence="1">
    <location>
        <begin position="107"/>
        <end position="127"/>
    </location>
</feature>
<feature type="transmembrane region" description="Helical" evidence="1">
    <location>
        <begin position="147"/>
        <end position="167"/>
    </location>
</feature>
<feature type="transmembrane region" description="Helical" evidence="1">
    <location>
        <begin position="188"/>
        <end position="208"/>
    </location>
</feature>
<feature type="transmembrane region" description="Helical" evidence="1">
    <location>
        <begin position="218"/>
        <end position="238"/>
    </location>
</feature>
<feature type="transmembrane region" description="Helical" evidence="1">
    <location>
        <begin position="251"/>
        <end position="271"/>
    </location>
</feature>
<accession>B3EQ23</accession>
<protein>
    <recommendedName>
        <fullName evidence="1">UPF0761 membrane protein Cphamn1_1013</fullName>
    </recommendedName>
</protein>
<comment type="subcellular location">
    <subcellularLocation>
        <location evidence="1">Cell inner membrane</location>
        <topology evidence="1">Multi-pass membrane protein</topology>
    </subcellularLocation>
</comment>
<comment type="similarity">
    <text evidence="1">Belongs to the UPF0761 family.</text>
</comment>
<name>Y1013_CHLPB</name>
<reference key="1">
    <citation type="submission" date="2008-06" db="EMBL/GenBank/DDBJ databases">
        <title>Complete sequence of Chlorobium phaeobacteroides BS1.</title>
        <authorList>
            <consortium name="US DOE Joint Genome Institute"/>
            <person name="Lucas S."/>
            <person name="Copeland A."/>
            <person name="Lapidus A."/>
            <person name="Glavina del Rio T."/>
            <person name="Dalin E."/>
            <person name="Tice H."/>
            <person name="Bruce D."/>
            <person name="Goodwin L."/>
            <person name="Pitluck S."/>
            <person name="Schmutz J."/>
            <person name="Larimer F."/>
            <person name="Land M."/>
            <person name="Hauser L."/>
            <person name="Kyrpides N."/>
            <person name="Ovchinnikova G."/>
            <person name="Li T."/>
            <person name="Liu Z."/>
            <person name="Zhao F."/>
            <person name="Overmann J."/>
            <person name="Bryant D.A."/>
            <person name="Richardson P."/>
        </authorList>
    </citation>
    <scope>NUCLEOTIDE SEQUENCE [LARGE SCALE GENOMIC DNA]</scope>
    <source>
        <strain>BS1</strain>
    </source>
</reference>
<evidence type="ECO:0000255" key="1">
    <source>
        <dbReference type="HAMAP-Rule" id="MF_00672"/>
    </source>
</evidence>
<sequence length="427" mass="48357">MKASDTGSAGVLAGKLSALLSYLRSFLPFMWKNFMQDRVLLSAGSLAFQTLLSLIPLMAVVLSVLSVSPVFETFKRYVDDFLFQNFVPASGSMIREYFWEFIGNTATVPTVGGIFLLIIALFLISTIDHTINQIWDVRAPRKILQGFTLYWTVLTLGPIIIGSGLVASSYVWYTVFTEGPFLELRTRILSYLPLVNSFLAFFLLYMLVPNHRVRFLHAVSGAFLATWLFELSKQWFSFYVKTFATFEHIYGALSVIPLLFFWIYLIWVVALSGAEFVYCLGAVRQEVKKERKEFSTLHGLWDVLAVMEQIWKGQQCGQYVRYKKHALSGKGIDAARVRSIVAVLKENRLIHVTEDGEFALHCDIHEVTLFDLYSILPPEILVGSDAAVSGKRFEQLYELEAAVAACLRESLDKPLALYIKQEEGLPE</sequence>